<accession>Q8P9Y7</accession>
<reference key="1">
    <citation type="journal article" date="2002" name="Nature">
        <title>Comparison of the genomes of two Xanthomonas pathogens with differing host specificities.</title>
        <authorList>
            <person name="da Silva A.C.R."/>
            <person name="Ferro J.A."/>
            <person name="Reinach F.C."/>
            <person name="Farah C.S."/>
            <person name="Furlan L.R."/>
            <person name="Quaggio R.B."/>
            <person name="Monteiro-Vitorello C.B."/>
            <person name="Van Sluys M.A."/>
            <person name="Almeida N.F. Jr."/>
            <person name="Alves L.M.C."/>
            <person name="do Amaral A.M."/>
            <person name="Bertolini M.C."/>
            <person name="Camargo L.E.A."/>
            <person name="Camarotte G."/>
            <person name="Cannavan F."/>
            <person name="Cardozo J."/>
            <person name="Chambergo F."/>
            <person name="Ciapina L.P."/>
            <person name="Cicarelli R.M.B."/>
            <person name="Coutinho L.L."/>
            <person name="Cursino-Santos J.R."/>
            <person name="El-Dorry H."/>
            <person name="Faria J.B."/>
            <person name="Ferreira A.J.S."/>
            <person name="Ferreira R.C.C."/>
            <person name="Ferro M.I.T."/>
            <person name="Formighieri E.F."/>
            <person name="Franco M.C."/>
            <person name="Greggio C.C."/>
            <person name="Gruber A."/>
            <person name="Katsuyama A.M."/>
            <person name="Kishi L.T."/>
            <person name="Leite R.P."/>
            <person name="Lemos E.G.M."/>
            <person name="Lemos M.V.F."/>
            <person name="Locali E.C."/>
            <person name="Machado M.A."/>
            <person name="Madeira A.M.B.N."/>
            <person name="Martinez-Rossi N.M."/>
            <person name="Martins E.C."/>
            <person name="Meidanis J."/>
            <person name="Menck C.F.M."/>
            <person name="Miyaki C.Y."/>
            <person name="Moon D.H."/>
            <person name="Moreira L.M."/>
            <person name="Novo M.T.M."/>
            <person name="Okura V.K."/>
            <person name="Oliveira M.C."/>
            <person name="Oliveira V.R."/>
            <person name="Pereira H.A."/>
            <person name="Rossi A."/>
            <person name="Sena J.A.D."/>
            <person name="Silva C."/>
            <person name="de Souza R.F."/>
            <person name="Spinola L.A.F."/>
            <person name="Takita M.A."/>
            <person name="Tamura R.E."/>
            <person name="Teixeira E.C."/>
            <person name="Tezza R.I.D."/>
            <person name="Trindade dos Santos M."/>
            <person name="Truffi D."/>
            <person name="Tsai S.M."/>
            <person name="White F.F."/>
            <person name="Setubal J.C."/>
            <person name="Kitajima J.P."/>
        </authorList>
    </citation>
    <scope>NUCLEOTIDE SEQUENCE [LARGE SCALE GENOMIC DNA]</scope>
    <source>
        <strain>ATCC 33913 / DSM 3586 / NCPPB 528 / LMG 568 / P 25</strain>
    </source>
</reference>
<name>SURE_XANCP</name>
<comment type="function">
    <text evidence="1">Nucleotidase that shows phosphatase activity on nucleoside 5'-monophosphates.</text>
</comment>
<comment type="catalytic activity">
    <reaction evidence="1">
        <text>a ribonucleoside 5'-phosphate + H2O = a ribonucleoside + phosphate</text>
        <dbReference type="Rhea" id="RHEA:12484"/>
        <dbReference type="ChEBI" id="CHEBI:15377"/>
        <dbReference type="ChEBI" id="CHEBI:18254"/>
        <dbReference type="ChEBI" id="CHEBI:43474"/>
        <dbReference type="ChEBI" id="CHEBI:58043"/>
        <dbReference type="EC" id="3.1.3.5"/>
    </reaction>
</comment>
<comment type="cofactor">
    <cofactor evidence="1">
        <name>a divalent metal cation</name>
        <dbReference type="ChEBI" id="CHEBI:60240"/>
    </cofactor>
    <text evidence="1">Binds 1 divalent metal cation per subunit.</text>
</comment>
<comment type="subcellular location">
    <subcellularLocation>
        <location evidence="1">Cytoplasm</location>
    </subcellularLocation>
</comment>
<comment type="similarity">
    <text evidence="1">Belongs to the SurE nucleotidase family.</text>
</comment>
<feature type="chain" id="PRO_0000111856" description="5'-nucleotidase SurE">
    <location>
        <begin position="1"/>
        <end position="259"/>
    </location>
</feature>
<feature type="binding site" evidence="1">
    <location>
        <position position="8"/>
    </location>
    <ligand>
        <name>a divalent metal cation</name>
        <dbReference type="ChEBI" id="CHEBI:60240"/>
    </ligand>
</feature>
<feature type="binding site" evidence="1">
    <location>
        <position position="9"/>
    </location>
    <ligand>
        <name>a divalent metal cation</name>
        <dbReference type="ChEBI" id="CHEBI:60240"/>
    </ligand>
</feature>
<feature type="binding site" evidence="1">
    <location>
        <position position="40"/>
    </location>
    <ligand>
        <name>a divalent metal cation</name>
        <dbReference type="ChEBI" id="CHEBI:60240"/>
    </ligand>
</feature>
<feature type="binding site" evidence="1">
    <location>
        <position position="92"/>
    </location>
    <ligand>
        <name>a divalent metal cation</name>
        <dbReference type="ChEBI" id="CHEBI:60240"/>
    </ligand>
</feature>
<evidence type="ECO:0000255" key="1">
    <source>
        <dbReference type="HAMAP-Rule" id="MF_00060"/>
    </source>
</evidence>
<sequence length="259" mass="27356">MRVLVSNDDGVDAPGIQILAEALRRAGHEVMVVAPDRDRSGASNSLTLDVPIRTRRIDAQTCAVAGTPTDCVHLALTGMLDYDPDIVVSGINNSANLGDDVIYSGTVSAAMEGRFLGLPAVAVSLVTQNHEAHHFETAARAAVEIVARLKADPLPADTILNVNVPDLAWADVLGFEVTRLGNRHRSEPCVPQNDPRGRTVYWIGPAGPEQDAGAGTDFHAVRTGHISITPIHVDLTRYQALDTVAGWVGGLTAALDAPA</sequence>
<organism>
    <name type="scientific">Xanthomonas campestris pv. campestris (strain ATCC 33913 / DSM 3586 / NCPPB 528 / LMG 568 / P 25)</name>
    <dbReference type="NCBI Taxonomy" id="190485"/>
    <lineage>
        <taxon>Bacteria</taxon>
        <taxon>Pseudomonadati</taxon>
        <taxon>Pseudomonadota</taxon>
        <taxon>Gammaproteobacteria</taxon>
        <taxon>Lysobacterales</taxon>
        <taxon>Lysobacteraceae</taxon>
        <taxon>Xanthomonas</taxon>
    </lineage>
</organism>
<protein>
    <recommendedName>
        <fullName evidence="1">5'-nucleotidase SurE</fullName>
        <ecNumber evidence="1">3.1.3.5</ecNumber>
    </recommendedName>
    <alternativeName>
        <fullName evidence="1">Nucleoside 5'-monophosphate phosphohydrolase</fullName>
    </alternativeName>
</protein>
<proteinExistence type="inferred from homology"/>
<gene>
    <name evidence="1" type="primary">surE</name>
    <name type="ordered locus">XCC1706</name>
</gene>
<keyword id="KW-0963">Cytoplasm</keyword>
<keyword id="KW-0378">Hydrolase</keyword>
<keyword id="KW-0479">Metal-binding</keyword>
<keyword id="KW-0547">Nucleotide-binding</keyword>
<keyword id="KW-1185">Reference proteome</keyword>
<dbReference type="EC" id="3.1.3.5" evidence="1"/>
<dbReference type="EMBL" id="AE008922">
    <property type="protein sequence ID" value="AAM41000.1"/>
    <property type="molecule type" value="Genomic_DNA"/>
</dbReference>
<dbReference type="RefSeq" id="NP_637076.1">
    <property type="nucleotide sequence ID" value="NC_003902.1"/>
</dbReference>
<dbReference type="RefSeq" id="WP_011036883.1">
    <property type="nucleotide sequence ID" value="NC_003902.1"/>
</dbReference>
<dbReference type="SMR" id="Q8P9Y7"/>
<dbReference type="STRING" id="190485.XCC1706"/>
<dbReference type="EnsemblBacteria" id="AAM41000">
    <property type="protein sequence ID" value="AAM41000"/>
    <property type="gene ID" value="XCC1706"/>
</dbReference>
<dbReference type="KEGG" id="xcc:XCC1706"/>
<dbReference type="PATRIC" id="fig|190485.4.peg.1820"/>
<dbReference type="eggNOG" id="COG0496">
    <property type="taxonomic scope" value="Bacteria"/>
</dbReference>
<dbReference type="HOGENOM" id="CLU_045192_1_2_6"/>
<dbReference type="OrthoDB" id="9780815at2"/>
<dbReference type="Proteomes" id="UP000001010">
    <property type="component" value="Chromosome"/>
</dbReference>
<dbReference type="GO" id="GO:0005737">
    <property type="term" value="C:cytoplasm"/>
    <property type="evidence" value="ECO:0007669"/>
    <property type="project" value="UniProtKB-SubCell"/>
</dbReference>
<dbReference type="GO" id="GO:0008254">
    <property type="term" value="F:3'-nucleotidase activity"/>
    <property type="evidence" value="ECO:0000318"/>
    <property type="project" value="GO_Central"/>
</dbReference>
<dbReference type="GO" id="GO:0008253">
    <property type="term" value="F:5'-nucleotidase activity"/>
    <property type="evidence" value="ECO:0000318"/>
    <property type="project" value="GO_Central"/>
</dbReference>
<dbReference type="GO" id="GO:0004309">
    <property type="term" value="F:exopolyphosphatase activity"/>
    <property type="evidence" value="ECO:0000318"/>
    <property type="project" value="GO_Central"/>
</dbReference>
<dbReference type="GO" id="GO:0046872">
    <property type="term" value="F:metal ion binding"/>
    <property type="evidence" value="ECO:0007669"/>
    <property type="project" value="UniProtKB-UniRule"/>
</dbReference>
<dbReference type="GO" id="GO:0000166">
    <property type="term" value="F:nucleotide binding"/>
    <property type="evidence" value="ECO:0007669"/>
    <property type="project" value="UniProtKB-KW"/>
</dbReference>
<dbReference type="FunFam" id="3.40.1210.10:FF:000001">
    <property type="entry name" value="5'/3'-nucleotidase SurE"/>
    <property type="match status" value="1"/>
</dbReference>
<dbReference type="Gene3D" id="3.40.1210.10">
    <property type="entry name" value="Survival protein SurE-like phosphatase/nucleotidase"/>
    <property type="match status" value="1"/>
</dbReference>
<dbReference type="HAMAP" id="MF_00060">
    <property type="entry name" value="SurE"/>
    <property type="match status" value="1"/>
</dbReference>
<dbReference type="InterPro" id="IPR030048">
    <property type="entry name" value="SurE"/>
</dbReference>
<dbReference type="InterPro" id="IPR002828">
    <property type="entry name" value="SurE-like_Pase/nucleotidase"/>
</dbReference>
<dbReference type="InterPro" id="IPR036523">
    <property type="entry name" value="SurE-like_sf"/>
</dbReference>
<dbReference type="NCBIfam" id="NF001489">
    <property type="entry name" value="PRK00346.1-3"/>
    <property type="match status" value="1"/>
</dbReference>
<dbReference type="NCBIfam" id="NF001490">
    <property type="entry name" value="PRK00346.1-4"/>
    <property type="match status" value="1"/>
</dbReference>
<dbReference type="NCBIfam" id="TIGR00087">
    <property type="entry name" value="surE"/>
    <property type="match status" value="1"/>
</dbReference>
<dbReference type="PANTHER" id="PTHR30457">
    <property type="entry name" value="5'-NUCLEOTIDASE SURE"/>
    <property type="match status" value="1"/>
</dbReference>
<dbReference type="PANTHER" id="PTHR30457:SF12">
    <property type="entry name" value="5'_3'-NUCLEOTIDASE SURE"/>
    <property type="match status" value="1"/>
</dbReference>
<dbReference type="Pfam" id="PF01975">
    <property type="entry name" value="SurE"/>
    <property type="match status" value="1"/>
</dbReference>
<dbReference type="SUPFAM" id="SSF64167">
    <property type="entry name" value="SurE-like"/>
    <property type="match status" value="1"/>
</dbReference>